<dbReference type="EC" id="1.-.-.-"/>
<dbReference type="EMBL" id="AF502293">
    <property type="protein sequence ID" value="AAM22475.1"/>
    <property type="molecule type" value="Genomic_DNA"/>
</dbReference>
<dbReference type="EMBL" id="CP003820">
    <property type="protein sequence ID" value="AFR92299.1"/>
    <property type="molecule type" value="Genomic_DNA"/>
</dbReference>
<dbReference type="RefSeq" id="XP_012046575.1">
    <property type="nucleotide sequence ID" value="XM_012191185.1"/>
</dbReference>
<dbReference type="SMR" id="Q8NKE2"/>
<dbReference type="GeneID" id="23884025"/>
<dbReference type="KEGG" id="cng:CNAG_00162"/>
<dbReference type="VEuPathDB" id="FungiDB:CNAG_00162"/>
<dbReference type="HOGENOM" id="CLU_041974_1_0_1"/>
<dbReference type="OrthoDB" id="2000at5206"/>
<dbReference type="PHI-base" id="PHI:275"/>
<dbReference type="Proteomes" id="UP000010091">
    <property type="component" value="Chromosome 1"/>
</dbReference>
<dbReference type="GO" id="GO:0005743">
    <property type="term" value="C:mitochondrial inner membrane"/>
    <property type="evidence" value="ECO:0007669"/>
    <property type="project" value="UniProtKB-SubCell"/>
</dbReference>
<dbReference type="GO" id="GO:0009916">
    <property type="term" value="F:alternative oxidase activity"/>
    <property type="evidence" value="ECO:0007669"/>
    <property type="project" value="InterPro"/>
</dbReference>
<dbReference type="GO" id="GO:0046872">
    <property type="term" value="F:metal ion binding"/>
    <property type="evidence" value="ECO:0007669"/>
    <property type="project" value="UniProtKB-KW"/>
</dbReference>
<dbReference type="GO" id="GO:0010230">
    <property type="term" value="P:alternative respiration"/>
    <property type="evidence" value="ECO:0007669"/>
    <property type="project" value="TreeGrafter"/>
</dbReference>
<dbReference type="CDD" id="cd01053">
    <property type="entry name" value="AOX"/>
    <property type="match status" value="1"/>
</dbReference>
<dbReference type="FunFam" id="1.20.1260.140:FF:000002">
    <property type="entry name" value="Alternative oxidase"/>
    <property type="match status" value="1"/>
</dbReference>
<dbReference type="Gene3D" id="1.20.1260.140">
    <property type="entry name" value="Alternative oxidase"/>
    <property type="match status" value="1"/>
</dbReference>
<dbReference type="InterPro" id="IPR002680">
    <property type="entry name" value="AOX"/>
</dbReference>
<dbReference type="InterPro" id="IPR038659">
    <property type="entry name" value="AOX_sf"/>
</dbReference>
<dbReference type="PANTHER" id="PTHR31803">
    <property type="entry name" value="ALTERNATIVE OXIDASE"/>
    <property type="match status" value="1"/>
</dbReference>
<dbReference type="PANTHER" id="PTHR31803:SF3">
    <property type="entry name" value="ALTERNATIVE OXIDASE"/>
    <property type="match status" value="1"/>
</dbReference>
<dbReference type="Pfam" id="PF01786">
    <property type="entry name" value="AOX"/>
    <property type="match status" value="1"/>
</dbReference>
<dbReference type="PIRSF" id="PIRSF005229">
    <property type="entry name" value="AOX"/>
    <property type="match status" value="1"/>
</dbReference>
<comment type="function">
    <text evidence="1">Catalyzes cyanide-resistant oxygen consumption. May increase respiration when the cytochrome respiratory pathway is restricted, or in response to low temperatures (By similarity).</text>
</comment>
<comment type="cofactor">
    <cofactor evidence="2">
        <name>Fe cation</name>
        <dbReference type="ChEBI" id="CHEBI:24875"/>
    </cofactor>
    <text evidence="2">Binds 2 iron ions per subunit.</text>
</comment>
<comment type="subcellular location">
    <subcellularLocation>
        <location evidence="1">Mitochondrion inner membrane</location>
        <topology evidence="1">Multi-pass membrane protein</topology>
        <orientation evidence="1">Matrix side</orientation>
    </subcellularLocation>
</comment>
<comment type="similarity">
    <text evidence="5">Belongs to the alternative oxidase family.</text>
</comment>
<gene>
    <name type="primary">AOX1</name>
    <name type="ORF">CNAG_00162</name>
</gene>
<keyword id="KW-0249">Electron transport</keyword>
<keyword id="KW-0408">Iron</keyword>
<keyword id="KW-0472">Membrane</keyword>
<keyword id="KW-0479">Metal-binding</keyword>
<keyword id="KW-0496">Mitochondrion</keyword>
<keyword id="KW-0999">Mitochondrion inner membrane</keyword>
<keyword id="KW-0560">Oxidoreductase</keyword>
<keyword id="KW-0679">Respiratory chain</keyword>
<keyword id="KW-0809">Transit peptide</keyword>
<keyword id="KW-0812">Transmembrane</keyword>
<keyword id="KW-1133">Transmembrane helix</keyword>
<keyword id="KW-0813">Transport</keyword>
<organism>
    <name type="scientific">Cryptococcus neoformans var. grubii serotype A (strain H99 / ATCC 208821 / CBS 10515 / FGSC 9487)</name>
    <name type="common">Filobasidiella neoformans var. grubii</name>
    <dbReference type="NCBI Taxonomy" id="235443"/>
    <lineage>
        <taxon>Eukaryota</taxon>
        <taxon>Fungi</taxon>
        <taxon>Dikarya</taxon>
        <taxon>Basidiomycota</taxon>
        <taxon>Agaricomycotina</taxon>
        <taxon>Tremellomycetes</taxon>
        <taxon>Tremellales</taxon>
        <taxon>Cryptococcaceae</taxon>
        <taxon>Cryptococcus</taxon>
        <taxon>Cryptococcus neoformans species complex</taxon>
    </lineage>
</organism>
<protein>
    <recommendedName>
        <fullName>Alternative oxidase, mitochondrial</fullName>
        <ecNumber>1.-.-.-</ecNumber>
    </recommendedName>
</protein>
<sequence>MSAIMLRSGNVARSTILAGGPLIGGPMTFRSAVSSTRTFSLFTKARIQSDDMKRASLSLQPSVREAEKSQGPVVGSEGRGVEGPHYQDQVSHNVLSDASTTGAWTMFNPIYTEKELNTVQVVGRAPVTFGDKAAHRTVKFLRKCFDLLTGYTPYEVPASVLAQKPIPIAELRSKGKLLSDQKWLFRIILLESIAGVPGMVGGTLRHLRSMRLLKRDGGWIHSLLEEAENERMHLLTFMTIAQPGIFTRALVLAAQGVFYNAFFLTYLISPRIAHRFVGALEEEAVRTYTHCISDMEAGLIPEWKDMPAPAIAIDYWRLPASSSLLDVIRAVRADEATHRFVNHSLANLDQKRDFNPFALSEASPEERGSKWGYTREESAKFALEQQRKLMAASEKSSGLVE</sequence>
<reference key="1">
    <citation type="journal article" date="2003" name="Infect. Immun.">
        <title>Role of alternative oxidase gene in pathogenesis of Cryptococcus neoformans.</title>
        <authorList>
            <person name="Akhter S."/>
            <person name="McDade H.C."/>
            <person name="Gorlach J.M."/>
            <person name="Heinrich G."/>
            <person name="Cox G.M."/>
            <person name="Perfect J.R."/>
        </authorList>
    </citation>
    <scope>NUCLEOTIDE SEQUENCE [GENOMIC DNA]</scope>
    <source>
        <strain>H99 / ATCC 208821 / CBS 10515 / FGSC 9487</strain>
    </source>
</reference>
<reference key="2">
    <citation type="journal article" date="2014" name="PLoS Genet.">
        <title>Analysis of the genome and transcriptome of Cryptococcus neoformans var. grubii reveals complex RNA expression and microevolution leading to virulence attenuation.</title>
        <authorList>
            <person name="Janbon G."/>
            <person name="Ormerod K.L."/>
            <person name="Paulet D."/>
            <person name="Byrnes E.J. III"/>
            <person name="Yadav V."/>
            <person name="Chatterjee G."/>
            <person name="Mullapudi N."/>
            <person name="Hon C.-C."/>
            <person name="Billmyre R.B."/>
            <person name="Brunel F."/>
            <person name="Bahn Y.-S."/>
            <person name="Chen W."/>
            <person name="Chen Y."/>
            <person name="Chow E.W.L."/>
            <person name="Coppee J.-Y."/>
            <person name="Floyd-Averette A."/>
            <person name="Gaillardin C."/>
            <person name="Gerik K.J."/>
            <person name="Goldberg J."/>
            <person name="Gonzalez-Hilarion S."/>
            <person name="Gujja S."/>
            <person name="Hamlin J.L."/>
            <person name="Hsueh Y.-P."/>
            <person name="Ianiri G."/>
            <person name="Jones S."/>
            <person name="Kodira C.D."/>
            <person name="Kozubowski L."/>
            <person name="Lam W."/>
            <person name="Marra M."/>
            <person name="Mesner L.D."/>
            <person name="Mieczkowski P.A."/>
            <person name="Moyrand F."/>
            <person name="Nielsen K."/>
            <person name="Proux C."/>
            <person name="Rossignol T."/>
            <person name="Schein J.E."/>
            <person name="Sun S."/>
            <person name="Wollschlaeger C."/>
            <person name="Wood I.A."/>
            <person name="Zeng Q."/>
            <person name="Neuveglise C."/>
            <person name="Newlon C.S."/>
            <person name="Perfect J.R."/>
            <person name="Lodge J.K."/>
            <person name="Idnurm A."/>
            <person name="Stajich J.E."/>
            <person name="Kronstad J.W."/>
            <person name="Sanyal K."/>
            <person name="Heitman J."/>
            <person name="Fraser J.A."/>
            <person name="Cuomo C.A."/>
            <person name="Dietrich F.S."/>
        </authorList>
    </citation>
    <scope>NUCLEOTIDE SEQUENCE [LARGE SCALE GENOMIC DNA]</scope>
    <source>
        <strain>H99 / ATCC 208821 / CBS 10515 / FGSC 9487</strain>
    </source>
</reference>
<feature type="transit peptide" description="Mitochondrion" evidence="3">
    <location>
        <begin position="1"/>
        <end status="unknown"/>
    </location>
</feature>
<feature type="chain" id="PRO_0000001719" description="Alternative oxidase, mitochondrial">
    <location>
        <begin status="unknown"/>
        <end position="401"/>
    </location>
</feature>
<feature type="transmembrane region" description="Helical" evidence="3">
    <location>
        <begin position="184"/>
        <end position="204"/>
    </location>
</feature>
<feature type="transmembrane region" description="Helical" evidence="3">
    <location>
        <begin position="249"/>
        <end position="269"/>
    </location>
</feature>
<feature type="region of interest" description="Disordered" evidence="4">
    <location>
        <begin position="53"/>
        <end position="81"/>
    </location>
</feature>
<feature type="binding site" evidence="2">
    <location>
        <position position="191"/>
    </location>
    <ligand>
        <name>Fe cation</name>
        <dbReference type="ChEBI" id="CHEBI:24875"/>
        <label>1</label>
    </ligand>
</feature>
<feature type="binding site" evidence="3">
    <location>
        <position position="191"/>
    </location>
    <ligand>
        <name>Fe cation</name>
        <dbReference type="ChEBI" id="CHEBI:24875"/>
    </ligand>
</feature>
<feature type="binding site" evidence="2">
    <location>
        <position position="230"/>
    </location>
    <ligand>
        <name>Fe cation</name>
        <dbReference type="ChEBI" id="CHEBI:24875"/>
        <label>1</label>
    </ligand>
</feature>
<feature type="binding site" evidence="2">
    <location>
        <position position="230"/>
    </location>
    <ligand>
        <name>Fe cation</name>
        <dbReference type="ChEBI" id="CHEBI:24875"/>
        <label>2</label>
    </ligand>
</feature>
<feature type="binding site" evidence="3">
    <location>
        <position position="230"/>
    </location>
    <ligand>
        <name>Fe cation</name>
        <dbReference type="ChEBI" id="CHEBI:24875"/>
    </ligand>
</feature>
<feature type="binding site" evidence="2">
    <location>
        <position position="233"/>
    </location>
    <ligand>
        <name>Fe cation</name>
        <dbReference type="ChEBI" id="CHEBI:24875"/>
        <label>1</label>
    </ligand>
</feature>
<feature type="binding site" evidence="3">
    <location>
        <position position="233"/>
    </location>
    <ligand>
        <name>Fe cation</name>
        <dbReference type="ChEBI" id="CHEBI:24875"/>
    </ligand>
</feature>
<feature type="binding site" evidence="2">
    <location>
        <position position="281"/>
    </location>
    <ligand>
        <name>Fe cation</name>
        <dbReference type="ChEBI" id="CHEBI:24875"/>
        <label>2</label>
    </ligand>
</feature>
<feature type="binding site" evidence="3">
    <location>
        <position position="282"/>
    </location>
    <ligand>
        <name>Fe cation</name>
        <dbReference type="ChEBI" id="CHEBI:24875"/>
    </ligand>
</feature>
<feature type="binding site" evidence="2">
    <location>
        <position position="335"/>
    </location>
    <ligand>
        <name>Fe cation</name>
        <dbReference type="ChEBI" id="CHEBI:24875"/>
        <label>1</label>
    </ligand>
</feature>
<feature type="binding site" evidence="2">
    <location>
        <position position="335"/>
    </location>
    <ligand>
        <name>Fe cation</name>
        <dbReference type="ChEBI" id="CHEBI:24875"/>
        <label>2</label>
    </ligand>
</feature>
<feature type="binding site" evidence="3">
    <location>
        <position position="335"/>
    </location>
    <ligand>
        <name>Fe cation</name>
        <dbReference type="ChEBI" id="CHEBI:24875"/>
    </ligand>
</feature>
<feature type="binding site" evidence="2">
    <location>
        <position position="338"/>
    </location>
    <ligand>
        <name>Fe cation</name>
        <dbReference type="ChEBI" id="CHEBI:24875"/>
        <label>2</label>
    </ligand>
</feature>
<feature type="binding site" evidence="3">
    <location>
        <position position="338"/>
    </location>
    <ligand>
        <name>Fe cation</name>
        <dbReference type="ChEBI" id="CHEBI:24875"/>
    </ligand>
</feature>
<feature type="sequence conflict" description="In Ref. 1; AAM22475." evidence="5" ref="1">
    <original>G</original>
    <variation>E</variation>
    <location>
        <position position="80"/>
    </location>
</feature>
<feature type="sequence conflict" description="In Ref. 1; AAM22475." evidence="5" ref="1">
    <original>F</original>
    <variation>L</variation>
    <location>
        <position position="107"/>
    </location>
</feature>
<accession>Q8NKE2</accession>
<accession>J9VI64</accession>
<proteinExistence type="inferred from homology"/>
<name>AOX_CRYNH</name>
<evidence type="ECO:0000250" key="1"/>
<evidence type="ECO:0000250" key="2">
    <source>
        <dbReference type="UniProtKB" id="Q26710"/>
    </source>
</evidence>
<evidence type="ECO:0000255" key="3"/>
<evidence type="ECO:0000256" key="4">
    <source>
        <dbReference type="SAM" id="MobiDB-lite"/>
    </source>
</evidence>
<evidence type="ECO:0000305" key="5"/>